<organism>
    <name type="scientific">Oenococcus oeni (strain ATCC BAA-331 / PSU-1)</name>
    <dbReference type="NCBI Taxonomy" id="203123"/>
    <lineage>
        <taxon>Bacteria</taxon>
        <taxon>Bacillati</taxon>
        <taxon>Bacillota</taxon>
        <taxon>Bacilli</taxon>
        <taxon>Lactobacillales</taxon>
        <taxon>Lactobacillaceae</taxon>
        <taxon>Oenococcus</taxon>
    </lineage>
</organism>
<proteinExistence type="inferred from homology"/>
<keyword id="KW-0066">ATP synthesis</keyword>
<keyword id="KW-0067">ATP-binding</keyword>
<keyword id="KW-1003">Cell membrane</keyword>
<keyword id="KW-0139">CF(1)</keyword>
<keyword id="KW-0375">Hydrogen ion transport</keyword>
<keyword id="KW-0406">Ion transport</keyword>
<keyword id="KW-0472">Membrane</keyword>
<keyword id="KW-0547">Nucleotide-binding</keyword>
<keyword id="KW-1185">Reference proteome</keyword>
<keyword id="KW-1278">Translocase</keyword>
<keyword id="KW-0813">Transport</keyword>
<name>ATPB_OENOB</name>
<dbReference type="EC" id="7.1.2.2" evidence="1"/>
<dbReference type="EMBL" id="CP000411">
    <property type="protein sequence ID" value="ABJ56602.1"/>
    <property type="status" value="ALT_INIT"/>
    <property type="molecule type" value="Genomic_DNA"/>
</dbReference>
<dbReference type="RefSeq" id="WP_032806919.1">
    <property type="nucleotide sequence ID" value="NC_008528.1"/>
</dbReference>
<dbReference type="SMR" id="Q04G20"/>
<dbReference type="STRING" id="203123.OEOE_0665"/>
<dbReference type="KEGG" id="ooe:OEOE_0665"/>
<dbReference type="PATRIC" id="fig|203123.7.peg.673"/>
<dbReference type="eggNOG" id="COG0055">
    <property type="taxonomic scope" value="Bacteria"/>
</dbReference>
<dbReference type="HOGENOM" id="CLU_022398_0_2_9"/>
<dbReference type="Proteomes" id="UP000000774">
    <property type="component" value="Chromosome"/>
</dbReference>
<dbReference type="GO" id="GO:0005886">
    <property type="term" value="C:plasma membrane"/>
    <property type="evidence" value="ECO:0007669"/>
    <property type="project" value="UniProtKB-SubCell"/>
</dbReference>
<dbReference type="GO" id="GO:0045259">
    <property type="term" value="C:proton-transporting ATP synthase complex"/>
    <property type="evidence" value="ECO:0007669"/>
    <property type="project" value="UniProtKB-KW"/>
</dbReference>
<dbReference type="GO" id="GO:0005524">
    <property type="term" value="F:ATP binding"/>
    <property type="evidence" value="ECO:0007669"/>
    <property type="project" value="UniProtKB-UniRule"/>
</dbReference>
<dbReference type="GO" id="GO:0016887">
    <property type="term" value="F:ATP hydrolysis activity"/>
    <property type="evidence" value="ECO:0007669"/>
    <property type="project" value="InterPro"/>
</dbReference>
<dbReference type="GO" id="GO:0046933">
    <property type="term" value="F:proton-transporting ATP synthase activity, rotational mechanism"/>
    <property type="evidence" value="ECO:0007669"/>
    <property type="project" value="UniProtKB-UniRule"/>
</dbReference>
<dbReference type="CDD" id="cd18110">
    <property type="entry name" value="ATP-synt_F1_beta_C"/>
    <property type="match status" value="1"/>
</dbReference>
<dbReference type="CDD" id="cd18115">
    <property type="entry name" value="ATP-synt_F1_beta_N"/>
    <property type="match status" value="1"/>
</dbReference>
<dbReference type="CDD" id="cd01133">
    <property type="entry name" value="F1-ATPase_beta_CD"/>
    <property type="match status" value="1"/>
</dbReference>
<dbReference type="FunFam" id="1.10.1140.10:FF:000001">
    <property type="entry name" value="ATP synthase subunit beta"/>
    <property type="match status" value="1"/>
</dbReference>
<dbReference type="FunFam" id="2.40.10.170:FF:000005">
    <property type="entry name" value="ATP synthase subunit beta"/>
    <property type="match status" value="1"/>
</dbReference>
<dbReference type="FunFam" id="3.40.50.300:FF:000004">
    <property type="entry name" value="ATP synthase subunit beta"/>
    <property type="match status" value="1"/>
</dbReference>
<dbReference type="Gene3D" id="2.40.10.170">
    <property type="match status" value="1"/>
</dbReference>
<dbReference type="Gene3D" id="1.10.1140.10">
    <property type="entry name" value="Bovine Mitochondrial F1-atpase, Atp Synthase Beta Chain, Chain D, domain 3"/>
    <property type="match status" value="1"/>
</dbReference>
<dbReference type="Gene3D" id="3.40.50.300">
    <property type="entry name" value="P-loop containing nucleotide triphosphate hydrolases"/>
    <property type="match status" value="1"/>
</dbReference>
<dbReference type="HAMAP" id="MF_01347">
    <property type="entry name" value="ATP_synth_beta_bact"/>
    <property type="match status" value="1"/>
</dbReference>
<dbReference type="InterPro" id="IPR003593">
    <property type="entry name" value="AAA+_ATPase"/>
</dbReference>
<dbReference type="InterPro" id="IPR055190">
    <property type="entry name" value="ATP-synt_VA_C"/>
</dbReference>
<dbReference type="InterPro" id="IPR005722">
    <property type="entry name" value="ATP_synth_F1_bsu"/>
</dbReference>
<dbReference type="InterPro" id="IPR020003">
    <property type="entry name" value="ATPase_a/bsu_AS"/>
</dbReference>
<dbReference type="InterPro" id="IPR050053">
    <property type="entry name" value="ATPase_alpha/beta_chains"/>
</dbReference>
<dbReference type="InterPro" id="IPR004100">
    <property type="entry name" value="ATPase_F1/V1/A1_a/bsu_N"/>
</dbReference>
<dbReference type="InterPro" id="IPR036121">
    <property type="entry name" value="ATPase_F1/V1/A1_a/bsu_N_sf"/>
</dbReference>
<dbReference type="InterPro" id="IPR000194">
    <property type="entry name" value="ATPase_F1/V1/A1_a/bsu_nucl-bd"/>
</dbReference>
<dbReference type="InterPro" id="IPR024034">
    <property type="entry name" value="ATPase_F1/V1_b/a_C"/>
</dbReference>
<dbReference type="InterPro" id="IPR027417">
    <property type="entry name" value="P-loop_NTPase"/>
</dbReference>
<dbReference type="NCBIfam" id="TIGR01039">
    <property type="entry name" value="atpD"/>
    <property type="match status" value="1"/>
</dbReference>
<dbReference type="PANTHER" id="PTHR15184">
    <property type="entry name" value="ATP SYNTHASE"/>
    <property type="match status" value="1"/>
</dbReference>
<dbReference type="PANTHER" id="PTHR15184:SF71">
    <property type="entry name" value="ATP SYNTHASE SUBUNIT BETA, MITOCHONDRIAL"/>
    <property type="match status" value="1"/>
</dbReference>
<dbReference type="Pfam" id="PF00006">
    <property type="entry name" value="ATP-synt_ab"/>
    <property type="match status" value="1"/>
</dbReference>
<dbReference type="Pfam" id="PF02874">
    <property type="entry name" value="ATP-synt_ab_N"/>
    <property type="match status" value="1"/>
</dbReference>
<dbReference type="Pfam" id="PF22919">
    <property type="entry name" value="ATP-synt_VA_C"/>
    <property type="match status" value="1"/>
</dbReference>
<dbReference type="SMART" id="SM00382">
    <property type="entry name" value="AAA"/>
    <property type="match status" value="1"/>
</dbReference>
<dbReference type="SUPFAM" id="SSF47917">
    <property type="entry name" value="C-terminal domain of alpha and beta subunits of F1 ATP synthase"/>
    <property type="match status" value="1"/>
</dbReference>
<dbReference type="SUPFAM" id="SSF50615">
    <property type="entry name" value="N-terminal domain of alpha and beta subunits of F1 ATP synthase"/>
    <property type="match status" value="1"/>
</dbReference>
<dbReference type="SUPFAM" id="SSF52540">
    <property type="entry name" value="P-loop containing nucleoside triphosphate hydrolases"/>
    <property type="match status" value="1"/>
</dbReference>
<dbReference type="PROSITE" id="PS00152">
    <property type="entry name" value="ATPASE_ALPHA_BETA"/>
    <property type="match status" value="1"/>
</dbReference>
<protein>
    <recommendedName>
        <fullName evidence="1">ATP synthase subunit beta</fullName>
        <ecNumber evidence="1">7.1.2.2</ecNumber>
    </recommendedName>
    <alternativeName>
        <fullName evidence="1">ATP synthase F1 sector subunit beta</fullName>
    </alternativeName>
    <alternativeName>
        <fullName evidence="1">F-ATPase subunit beta</fullName>
    </alternativeName>
</protein>
<gene>
    <name evidence="1" type="primary">atpD</name>
    <name type="ordered locus">OEOE_0665</name>
</gene>
<reference key="1">
    <citation type="journal article" date="2006" name="Proc. Natl. Acad. Sci. U.S.A.">
        <title>Comparative genomics of the lactic acid bacteria.</title>
        <authorList>
            <person name="Makarova K.S."/>
            <person name="Slesarev A."/>
            <person name="Wolf Y.I."/>
            <person name="Sorokin A."/>
            <person name="Mirkin B."/>
            <person name="Koonin E.V."/>
            <person name="Pavlov A."/>
            <person name="Pavlova N."/>
            <person name="Karamychev V."/>
            <person name="Polouchine N."/>
            <person name="Shakhova V."/>
            <person name="Grigoriev I."/>
            <person name="Lou Y."/>
            <person name="Rohksar D."/>
            <person name="Lucas S."/>
            <person name="Huang K."/>
            <person name="Goodstein D.M."/>
            <person name="Hawkins T."/>
            <person name="Plengvidhya V."/>
            <person name="Welker D."/>
            <person name="Hughes J."/>
            <person name="Goh Y."/>
            <person name="Benson A."/>
            <person name="Baldwin K."/>
            <person name="Lee J.-H."/>
            <person name="Diaz-Muniz I."/>
            <person name="Dosti B."/>
            <person name="Smeianov V."/>
            <person name="Wechter W."/>
            <person name="Barabote R."/>
            <person name="Lorca G."/>
            <person name="Altermann E."/>
            <person name="Barrangou R."/>
            <person name="Ganesan B."/>
            <person name="Xie Y."/>
            <person name="Rawsthorne H."/>
            <person name="Tamir D."/>
            <person name="Parker C."/>
            <person name="Breidt F."/>
            <person name="Broadbent J.R."/>
            <person name="Hutkins R."/>
            <person name="O'Sullivan D."/>
            <person name="Steele J."/>
            <person name="Unlu G."/>
            <person name="Saier M.H. Jr."/>
            <person name="Klaenhammer T."/>
            <person name="Richardson P."/>
            <person name="Kozyavkin S."/>
            <person name="Weimer B.C."/>
            <person name="Mills D.A."/>
        </authorList>
    </citation>
    <scope>NUCLEOTIDE SEQUENCE [LARGE SCALE GENOMIC DNA]</scope>
    <source>
        <strain>ATCC BAA-331 / PSU-1</strain>
    </source>
</reference>
<accession>Q04G20</accession>
<feature type="chain" id="PRO_0000339559" description="ATP synthase subunit beta">
    <location>
        <begin position="1"/>
        <end position="466"/>
    </location>
</feature>
<feature type="binding site" evidence="1">
    <location>
        <begin position="153"/>
        <end position="160"/>
    </location>
    <ligand>
        <name>ATP</name>
        <dbReference type="ChEBI" id="CHEBI:30616"/>
    </ligand>
</feature>
<sequence>MAEGTVLQVIGPIVDVQFPDNKKLPDINNALKVQRIDGSELTIEVSIDLGDSVVRTIAMDSTDGLTRGMKVLDTGAPIEVPVGEATLGRVFNVLGEPVDGGDPIPNSVDRHPIHRSAPKYDELATSTEVLETGIKVIDLLEPYLRGGKTGLFGGAGVGKTVLIQELIHNIAQGHNGISVFTGVGERTREGNDMYYEMKASGVLKNTAMVYGQMNEPPGARMRVGLTGLTMAEDFRDQEGKDVLLFIDNIFRFTQAGSEVSALLGRIPSAVGYQPTLATEMGQLQERITSTKKGSVTSIQAVYVPADDYTDPAPATTFAHLDATTNLERSLTQQGIYPAVDPLESTSSALTPDIVGEDHYEVATQVQHFLQRYKELQDIISILGMDELSDEEKTIVNRARRIQFFLSQPFSVAEQFTGVPGQYVPVEDTVRGFKEILDGKHDDLPEEAFRNVGTIEQAVEKAKKLES</sequence>
<evidence type="ECO:0000255" key="1">
    <source>
        <dbReference type="HAMAP-Rule" id="MF_01347"/>
    </source>
</evidence>
<evidence type="ECO:0000305" key="2"/>
<comment type="function">
    <text evidence="1">Produces ATP from ADP in the presence of a proton gradient across the membrane. The catalytic sites are hosted primarily by the beta subunits.</text>
</comment>
<comment type="catalytic activity">
    <reaction evidence="1">
        <text>ATP + H2O + 4 H(+)(in) = ADP + phosphate + 5 H(+)(out)</text>
        <dbReference type="Rhea" id="RHEA:57720"/>
        <dbReference type="ChEBI" id="CHEBI:15377"/>
        <dbReference type="ChEBI" id="CHEBI:15378"/>
        <dbReference type="ChEBI" id="CHEBI:30616"/>
        <dbReference type="ChEBI" id="CHEBI:43474"/>
        <dbReference type="ChEBI" id="CHEBI:456216"/>
        <dbReference type="EC" id="7.1.2.2"/>
    </reaction>
</comment>
<comment type="subunit">
    <text evidence="1">F-type ATPases have 2 components, CF(1) - the catalytic core - and CF(0) - the membrane proton channel. CF(1) has five subunits: alpha(3), beta(3), gamma(1), delta(1), epsilon(1). CF(0) has three main subunits: a(1), b(2) and c(9-12). The alpha and beta chains form an alternating ring which encloses part of the gamma chain. CF(1) is attached to CF(0) by a central stalk formed by the gamma and epsilon chains, while a peripheral stalk is formed by the delta and b chains.</text>
</comment>
<comment type="subcellular location">
    <subcellularLocation>
        <location evidence="1">Cell membrane</location>
        <topology evidence="1">Peripheral membrane protein</topology>
    </subcellularLocation>
</comment>
<comment type="similarity">
    <text evidence="1">Belongs to the ATPase alpha/beta chains family.</text>
</comment>
<comment type="sequence caution" evidence="2">
    <conflict type="erroneous initiation">
        <sequence resource="EMBL-CDS" id="ABJ56602"/>
    </conflict>
</comment>